<comment type="subunit">
    <text evidence="1">Binds to MLF1 and retains it in the nucleus.</text>
</comment>
<comment type="subcellular location">
    <subcellularLocation>
        <location evidence="1">Nucleus</location>
    </subcellularLocation>
</comment>
<evidence type="ECO:0000250" key="1">
    <source>
        <dbReference type="UniProtKB" id="Q00PI9"/>
    </source>
</evidence>
<evidence type="ECO:0000255" key="2">
    <source>
        <dbReference type="PROSITE-ProRule" id="PRU00186"/>
    </source>
</evidence>
<evidence type="ECO:0000255" key="3">
    <source>
        <dbReference type="PROSITE-ProRule" id="PRU00548"/>
    </source>
</evidence>
<evidence type="ECO:0000256" key="4">
    <source>
        <dbReference type="SAM" id="MobiDB-lite"/>
    </source>
</evidence>
<evidence type="ECO:0000269" key="5">
    <source ref="3"/>
</evidence>
<evidence type="ECO:0000305" key="6"/>
<evidence type="ECO:0000312" key="7">
    <source>
        <dbReference type="EMBL" id="ABF00125.1"/>
    </source>
</evidence>
<evidence type="ECO:0007744" key="8">
    <source>
    </source>
</evidence>
<accession>Q1KMD3</accession>
<accession>Q8N3B3</accession>
<keyword id="KW-0903">Direct protein sequencing</keyword>
<keyword id="KW-0488">Methylation</keyword>
<keyword id="KW-0539">Nucleus</keyword>
<keyword id="KW-0597">Phosphoprotein</keyword>
<keyword id="KW-1267">Proteomics identification</keyword>
<keyword id="KW-1185">Reference proteome</keyword>
<reference evidence="6 7" key="1">
    <citation type="submission" date="2006-03" db="EMBL/GenBank/DDBJ databases">
        <title>Scaffold attachment factor A2 (SAF-A2), a mobile isoform of a nucleoskeletal human protein.</title>
        <authorList>
            <person name="Herrmann F."/>
            <person name="Fackelmayer F.O."/>
        </authorList>
    </citation>
    <scope>NUCLEOTIDE SEQUENCE [MRNA]</scope>
</reference>
<reference key="2">
    <citation type="journal article" date="2007" name="BMC Genomics">
        <title>The full-ORF clone resource of the German cDNA consortium.</title>
        <authorList>
            <person name="Bechtel S."/>
            <person name="Rosenfelder H."/>
            <person name="Duda A."/>
            <person name="Schmidt C.P."/>
            <person name="Ernst U."/>
            <person name="Wellenreuther R."/>
            <person name="Mehrle A."/>
            <person name="Schuster C."/>
            <person name="Bahr A."/>
            <person name="Bloecker H."/>
            <person name="Heubner D."/>
            <person name="Hoerlein A."/>
            <person name="Michel G."/>
            <person name="Wedler H."/>
            <person name="Koehrer K."/>
            <person name="Ottenwaelder B."/>
            <person name="Poustka A."/>
            <person name="Wiemann S."/>
            <person name="Schupp I."/>
        </authorList>
    </citation>
    <scope>NUCLEOTIDE SEQUENCE [LARGE SCALE MRNA] OF 122-747</scope>
    <source>
        <tissue>Melanoma</tissue>
    </source>
</reference>
<reference evidence="6 7" key="3">
    <citation type="submission" date="2008-12" db="UniProtKB">
        <authorList>
            <person name="Bienvenut W.V."/>
            <person name="Lilla S."/>
            <person name="von Kriegsheim A."/>
            <person name="Lempens A."/>
            <person name="Kolch W."/>
        </authorList>
    </citation>
    <scope>PROTEIN SEQUENCE OF 161-174; 213-218; 226-237; 264-282; 298-315; 379-391; 481-494; 497-506; 509-521; 558-570; 594-601; 721-733 AND 739-747</scope>
    <scope>PHOSPHORYLATION AT SER-228</scope>
    <scope>IDENTIFICATION BY MASS SPECTROMETRY</scope>
    <source>
        <tissue>Ovarian carcinoma</tissue>
    </source>
</reference>
<reference key="4">
    <citation type="journal article" date="2011" name="BMC Syst. Biol.">
        <title>Initial characterization of the human central proteome.</title>
        <authorList>
            <person name="Burkard T.R."/>
            <person name="Planyavsky M."/>
            <person name="Kaupe I."/>
            <person name="Breitwieser F.P."/>
            <person name="Buerckstuemmer T."/>
            <person name="Bennett K.L."/>
            <person name="Superti-Furga G."/>
            <person name="Colinge J."/>
        </authorList>
    </citation>
    <scope>IDENTIFICATION BY MASS SPECTROMETRY [LARGE SCALE ANALYSIS]</scope>
</reference>
<reference key="5">
    <citation type="journal article" date="2014" name="Mol. Cell. Proteomics">
        <title>Immunoaffinity enrichment and mass spectrometry analysis of protein methylation.</title>
        <authorList>
            <person name="Guo A."/>
            <person name="Gu H."/>
            <person name="Zhou J."/>
            <person name="Mulhern D."/>
            <person name="Wang Y."/>
            <person name="Lee K.A."/>
            <person name="Yang V."/>
            <person name="Aguiar M."/>
            <person name="Kornhauser J."/>
            <person name="Jia X."/>
            <person name="Ren J."/>
            <person name="Beausoleil S.A."/>
            <person name="Silva J.C."/>
            <person name="Vemulapalli V."/>
            <person name="Bedford M.T."/>
            <person name="Comb M.J."/>
        </authorList>
    </citation>
    <scope>METHYLATION [LARGE SCALE ANALYSIS] AT ARG-738 AND ARG-747</scope>
    <scope>IDENTIFICATION BY MASS SPECTROMETRY [LARGE SCALE ANALYSIS]</scope>
    <source>
        <tissue>Colon carcinoma</tissue>
    </source>
</reference>
<feature type="chain" id="PRO_0000278142" description="Heterogeneous nuclear ribonucleoprotein U-like protein 2">
    <location>
        <begin position="1"/>
        <end position="747"/>
    </location>
</feature>
<feature type="domain" description="SAP" evidence="2">
    <location>
        <begin position="3"/>
        <end position="37"/>
    </location>
</feature>
<feature type="domain" description="B30.2/SPRY" evidence="3">
    <location>
        <begin position="226"/>
        <end position="419"/>
    </location>
</feature>
<feature type="region of interest" description="Disordered" evidence="4">
    <location>
        <begin position="40"/>
        <end position="242"/>
    </location>
</feature>
<feature type="region of interest" description="Disordered" evidence="4">
    <location>
        <begin position="627"/>
        <end position="666"/>
    </location>
</feature>
<feature type="compositionally biased region" description="Acidic residues" evidence="4">
    <location>
        <begin position="73"/>
        <end position="97"/>
    </location>
</feature>
<feature type="compositionally biased region" description="Low complexity" evidence="4">
    <location>
        <begin position="115"/>
        <end position="125"/>
    </location>
</feature>
<feature type="compositionally biased region" description="Gly residues" evidence="4">
    <location>
        <begin position="137"/>
        <end position="147"/>
    </location>
</feature>
<feature type="compositionally biased region" description="Basic and acidic residues" evidence="4">
    <location>
        <begin position="148"/>
        <end position="163"/>
    </location>
</feature>
<feature type="compositionally biased region" description="Basic and acidic residues" evidence="4">
    <location>
        <begin position="185"/>
        <end position="223"/>
    </location>
</feature>
<feature type="compositionally biased region" description="Acidic residues" evidence="4">
    <location>
        <begin position="232"/>
        <end position="242"/>
    </location>
</feature>
<feature type="compositionally biased region" description="Basic and acidic residues" evidence="4">
    <location>
        <begin position="627"/>
        <end position="639"/>
    </location>
</feature>
<feature type="compositionally biased region" description="Basic residues" evidence="4">
    <location>
        <begin position="640"/>
        <end position="654"/>
    </location>
</feature>
<feature type="modified residue" description="Phosphoserine" evidence="1">
    <location>
        <position position="161"/>
    </location>
</feature>
<feature type="modified residue" description="Phosphothreonine" evidence="1">
    <location>
        <position position="165"/>
    </location>
</feature>
<feature type="modified residue" description="Phosphoserine" evidence="1">
    <location>
        <position position="168"/>
    </location>
</feature>
<feature type="modified residue" description="Phosphoserine" evidence="1">
    <location>
        <position position="185"/>
    </location>
</feature>
<feature type="modified residue" description="Phosphoserine" evidence="1">
    <location>
        <position position="188"/>
    </location>
</feature>
<feature type="modified residue" description="Phosphoserine" evidence="1">
    <location>
        <position position="226"/>
    </location>
</feature>
<feature type="modified residue" description="Phosphoserine" evidence="5">
    <location>
        <position position="228"/>
    </location>
</feature>
<feature type="modified residue" description="Omega-N-methylarginine" evidence="1">
    <location>
        <position position="656"/>
    </location>
</feature>
<feature type="modified residue" description="Omega-N-methylarginine" evidence="1">
    <location>
        <position position="684"/>
    </location>
</feature>
<feature type="modified residue" description="Omega-N-methylarginine" evidence="8">
    <location>
        <position position="738"/>
    </location>
</feature>
<feature type="modified residue" description="Omega-N-methylarginine" evidence="8">
    <location>
        <position position="747"/>
    </location>
</feature>
<proteinExistence type="evidence at protein level"/>
<protein>
    <recommendedName>
        <fullName>Heterogeneous nuclear ribonucleoprotein U-like protein 2</fullName>
    </recommendedName>
    <alternativeName>
        <fullName>Scaffold-attachment factor A2</fullName>
        <shortName>SAF-A2</shortName>
    </alternativeName>
</protein>
<organism>
    <name type="scientific">Homo sapiens</name>
    <name type="common">Human</name>
    <dbReference type="NCBI Taxonomy" id="9606"/>
    <lineage>
        <taxon>Eukaryota</taxon>
        <taxon>Metazoa</taxon>
        <taxon>Chordata</taxon>
        <taxon>Craniata</taxon>
        <taxon>Vertebrata</taxon>
        <taxon>Euteleostomi</taxon>
        <taxon>Mammalia</taxon>
        <taxon>Eutheria</taxon>
        <taxon>Euarchontoglires</taxon>
        <taxon>Primates</taxon>
        <taxon>Haplorrhini</taxon>
        <taxon>Catarrhini</taxon>
        <taxon>Hominidae</taxon>
        <taxon>Homo</taxon>
    </lineage>
</organism>
<dbReference type="EMBL" id="DQ470474">
    <property type="protein sequence ID" value="ABF00125.1"/>
    <property type="molecule type" value="mRNA"/>
</dbReference>
<dbReference type="EMBL" id="AL834470">
    <property type="protein sequence ID" value="CAD39129.2"/>
    <property type="molecule type" value="mRNA"/>
</dbReference>
<dbReference type="CCDS" id="CCDS41659.1"/>
<dbReference type="RefSeq" id="NP_001073027.1">
    <property type="nucleotide sequence ID" value="NM_001079559.3"/>
</dbReference>
<dbReference type="SMR" id="Q1KMD3"/>
<dbReference type="BioGRID" id="128685">
    <property type="interactions" value="294"/>
</dbReference>
<dbReference type="FunCoup" id="Q1KMD3">
    <property type="interactions" value="3906"/>
</dbReference>
<dbReference type="IntAct" id="Q1KMD3">
    <property type="interactions" value="184"/>
</dbReference>
<dbReference type="MINT" id="Q1KMD3"/>
<dbReference type="STRING" id="9606.ENSP00000301785"/>
<dbReference type="GlyCosmos" id="Q1KMD3">
    <property type="glycosylation" value="2 sites, 1 glycan"/>
</dbReference>
<dbReference type="GlyGen" id="Q1KMD3">
    <property type="glycosylation" value="4 sites, 1 O-linked glycan (4 sites)"/>
</dbReference>
<dbReference type="iPTMnet" id="Q1KMD3"/>
<dbReference type="MetOSite" id="Q1KMD3"/>
<dbReference type="PhosphoSitePlus" id="Q1KMD3"/>
<dbReference type="SwissPalm" id="Q1KMD3"/>
<dbReference type="BioMuta" id="HNRNPUL2"/>
<dbReference type="DMDM" id="121940728"/>
<dbReference type="jPOST" id="Q1KMD3"/>
<dbReference type="MassIVE" id="Q1KMD3"/>
<dbReference type="PaxDb" id="9606-ENSP00000301785"/>
<dbReference type="PeptideAtlas" id="Q1KMD3"/>
<dbReference type="ProteomicsDB" id="61219"/>
<dbReference type="Pumba" id="Q1KMD3"/>
<dbReference type="Antibodypedia" id="50593">
    <property type="antibodies" value="72 antibodies from 23 providers"/>
</dbReference>
<dbReference type="DNASU" id="221092"/>
<dbReference type="Ensembl" id="ENST00000301785.7">
    <property type="protein sequence ID" value="ENSP00000301785.5"/>
    <property type="gene ID" value="ENSG00000214753.4"/>
</dbReference>
<dbReference type="GeneID" id="221092"/>
<dbReference type="KEGG" id="hsa:221092"/>
<dbReference type="MANE-Select" id="ENST00000301785.7">
    <property type="protein sequence ID" value="ENSP00000301785.5"/>
    <property type="RefSeq nucleotide sequence ID" value="NM_001079559.3"/>
    <property type="RefSeq protein sequence ID" value="NP_001073027.1"/>
</dbReference>
<dbReference type="UCSC" id="uc001nuw.4">
    <property type="organism name" value="human"/>
</dbReference>
<dbReference type="AGR" id="HGNC:25451"/>
<dbReference type="CTD" id="221092"/>
<dbReference type="DisGeNET" id="221092"/>
<dbReference type="GeneCards" id="HNRNPUL2"/>
<dbReference type="HGNC" id="HGNC:25451">
    <property type="gene designation" value="HNRNPUL2"/>
</dbReference>
<dbReference type="HPA" id="ENSG00000214753">
    <property type="expression patterns" value="Low tissue specificity"/>
</dbReference>
<dbReference type="neXtProt" id="NX_Q1KMD3"/>
<dbReference type="OpenTargets" id="ENSG00000214753"/>
<dbReference type="PharmGKB" id="PA162391554"/>
<dbReference type="VEuPathDB" id="HostDB:ENSG00000214753"/>
<dbReference type="eggNOG" id="KOG2242">
    <property type="taxonomic scope" value="Eukaryota"/>
</dbReference>
<dbReference type="GeneTree" id="ENSGT00940000160376"/>
<dbReference type="HOGENOM" id="CLU_012140_1_0_1"/>
<dbReference type="InParanoid" id="Q1KMD3"/>
<dbReference type="OMA" id="DSRGLKM"/>
<dbReference type="OrthoDB" id="445357at2759"/>
<dbReference type="PAN-GO" id="Q1KMD3">
    <property type="GO annotations" value="2 GO annotations based on evolutionary models"/>
</dbReference>
<dbReference type="PhylomeDB" id="Q1KMD3"/>
<dbReference type="TreeFam" id="TF317301"/>
<dbReference type="PathwayCommons" id="Q1KMD3"/>
<dbReference type="SignaLink" id="Q1KMD3"/>
<dbReference type="BioGRID-ORCS" id="221092">
    <property type="hits" value="51 hits in 1159 CRISPR screens"/>
</dbReference>
<dbReference type="GenomeRNAi" id="221092"/>
<dbReference type="Pharos" id="Q1KMD3">
    <property type="development level" value="Tbio"/>
</dbReference>
<dbReference type="PRO" id="PR:Q1KMD3"/>
<dbReference type="Proteomes" id="UP000005640">
    <property type="component" value="Chromosome 11"/>
</dbReference>
<dbReference type="RNAct" id="Q1KMD3">
    <property type="molecule type" value="protein"/>
</dbReference>
<dbReference type="Bgee" id="ENSG00000214753">
    <property type="expression patterns" value="Expressed in middle temporal gyrus and 182 other cell types or tissues"/>
</dbReference>
<dbReference type="GO" id="GO:0016020">
    <property type="term" value="C:membrane"/>
    <property type="evidence" value="ECO:0007005"/>
    <property type="project" value="UniProtKB"/>
</dbReference>
<dbReference type="GO" id="GO:0005654">
    <property type="term" value="C:nucleoplasm"/>
    <property type="evidence" value="ECO:0000314"/>
    <property type="project" value="HPA"/>
</dbReference>
<dbReference type="GO" id="GO:0005634">
    <property type="term" value="C:nucleus"/>
    <property type="evidence" value="ECO:0000250"/>
    <property type="project" value="UniProtKB"/>
</dbReference>
<dbReference type="GO" id="GO:0045202">
    <property type="term" value="C:synapse"/>
    <property type="evidence" value="ECO:0007669"/>
    <property type="project" value="Ensembl"/>
</dbReference>
<dbReference type="GO" id="GO:0003723">
    <property type="term" value="F:RNA binding"/>
    <property type="evidence" value="ECO:0007005"/>
    <property type="project" value="UniProtKB"/>
</dbReference>
<dbReference type="GO" id="GO:0000380">
    <property type="term" value="P:alternative mRNA splicing, via spliceosome"/>
    <property type="evidence" value="ECO:0000318"/>
    <property type="project" value="GO_Central"/>
</dbReference>
<dbReference type="CDD" id="cd12884">
    <property type="entry name" value="SPRY_hnRNP"/>
    <property type="match status" value="1"/>
</dbReference>
<dbReference type="FunFam" id="2.60.120.920:FF:000006">
    <property type="entry name" value="heterogeneous nuclear ribonucleoprotein U isoform X1"/>
    <property type="match status" value="1"/>
</dbReference>
<dbReference type="FunFam" id="3.40.50.300:FF:000355">
    <property type="entry name" value="Heterogeneous nuclear ribonucleoprotein U-like 1, isoform CRA_a"/>
    <property type="match status" value="1"/>
</dbReference>
<dbReference type="FunFam" id="1.10.720.30:FF:000017">
    <property type="entry name" value="heterogeneous nuclear ribonucleoprotein U-like protein 2"/>
    <property type="match status" value="1"/>
</dbReference>
<dbReference type="Gene3D" id="2.60.120.920">
    <property type="match status" value="1"/>
</dbReference>
<dbReference type="Gene3D" id="3.40.50.300">
    <property type="entry name" value="P-loop containing nucleotide triphosphate hydrolases"/>
    <property type="match status" value="1"/>
</dbReference>
<dbReference type="Gene3D" id="1.10.720.30">
    <property type="entry name" value="SAP domain"/>
    <property type="match status" value="1"/>
</dbReference>
<dbReference type="InterPro" id="IPR001870">
    <property type="entry name" value="B30.2/SPRY"/>
</dbReference>
<dbReference type="InterPro" id="IPR043136">
    <property type="entry name" value="B30.2/SPRY_sf"/>
</dbReference>
<dbReference type="InterPro" id="IPR013320">
    <property type="entry name" value="ConA-like_dom_sf"/>
</dbReference>
<dbReference type="InterPro" id="IPR027417">
    <property type="entry name" value="P-loop_NTPase"/>
</dbReference>
<dbReference type="InterPro" id="IPR003034">
    <property type="entry name" value="SAP_dom"/>
</dbReference>
<dbReference type="InterPro" id="IPR036361">
    <property type="entry name" value="SAP_dom_sf"/>
</dbReference>
<dbReference type="InterPro" id="IPR003877">
    <property type="entry name" value="SPRY_dom"/>
</dbReference>
<dbReference type="InterPro" id="IPR035778">
    <property type="entry name" value="SPRY_hnRNP_U"/>
</dbReference>
<dbReference type="PANTHER" id="PTHR12381">
    <property type="entry name" value="HETEROGENEOUS NUCLEAR RIBONUCLEOPROTEIN U FAMILY MEMBER"/>
    <property type="match status" value="1"/>
</dbReference>
<dbReference type="PANTHER" id="PTHR12381:SF66">
    <property type="entry name" value="HETEROGENEOUS NUCLEAR RIBONUCLEOPROTEIN U-LIKE PROTEIN 2"/>
    <property type="match status" value="1"/>
</dbReference>
<dbReference type="Pfam" id="PF13671">
    <property type="entry name" value="AAA_33"/>
    <property type="match status" value="1"/>
</dbReference>
<dbReference type="Pfam" id="PF02037">
    <property type="entry name" value="SAP"/>
    <property type="match status" value="1"/>
</dbReference>
<dbReference type="Pfam" id="PF00622">
    <property type="entry name" value="SPRY"/>
    <property type="match status" value="1"/>
</dbReference>
<dbReference type="SMART" id="SM00513">
    <property type="entry name" value="SAP"/>
    <property type="match status" value="1"/>
</dbReference>
<dbReference type="SMART" id="SM00449">
    <property type="entry name" value="SPRY"/>
    <property type="match status" value="1"/>
</dbReference>
<dbReference type="SUPFAM" id="SSF49899">
    <property type="entry name" value="Concanavalin A-like lectins/glucanases"/>
    <property type="match status" value="1"/>
</dbReference>
<dbReference type="SUPFAM" id="SSF52540">
    <property type="entry name" value="P-loop containing nucleoside triphosphate hydrolases"/>
    <property type="match status" value="1"/>
</dbReference>
<dbReference type="SUPFAM" id="SSF68906">
    <property type="entry name" value="SAP domain"/>
    <property type="match status" value="1"/>
</dbReference>
<dbReference type="PROSITE" id="PS50188">
    <property type="entry name" value="B302_SPRY"/>
    <property type="match status" value="1"/>
</dbReference>
<dbReference type="PROSITE" id="PS50800">
    <property type="entry name" value="SAP"/>
    <property type="match status" value="1"/>
</dbReference>
<name>HNRL2_HUMAN</name>
<gene>
    <name type="primary">HNRNPUL2</name>
    <name type="synonym">HNRPUL2</name>
</gene>
<sequence length="747" mass="85105">MEVKRLKVTELRSELQRRGLDSRGLKVDLAQRLQEALDAEMLEDEAGGGGAGPGGACKAEPRPVAASGGGPGGDEEEDEEEEEEDEEALLEDEDEEPPPAQALGQAAQPPPEPPEAAAMEAAAEPDASEKPAEATAGSGGVNGGEEQGLGKREEDEPEERSGDETPGSEVPGDKAAEEQGDDQDSEKSKPAGSDGERRGVKRQRDEKDEHGRAYYEFREEAYHSRSKSPLPPEEEAKDEEEDQTLVNLDTYTSDLHFQVSKDRYGGQPLFSEKFPTLWSGARSTYGVTKGKVCFEAKVTQNLPMKEGCTEVSLLRVGWSVDFSRPQLGEDEFSYGFDGRGLKAENGQFEEFGQTFGENDVIGCFANFETEEVELSFSKNGEDLGVAFWISKDSLADRALLPHVLCKNCVVELNFGQKEEPFFPPPEEFVFIHAVPVEERVRTAVPPKTIEECEVILMVGLPGSGKTQWALKYAKENPEKRYNVLGAETVLNQMRMKGLEEPEMDPKSRDLLVQQASQCLSKLVQIASRTKRNFILDQCNVYNSGQRRKLLLFKTFSRKVVVVVPNEEDWKKRLELRKEVEGDDVPESIMLEMKANFSLPEKCDYMDEVTYGELEKEEAQPIVTKYKEEARKLLPPSEKRTNRRNNRNKRNRQNRSRGQGYVGGQRRGYDNRAYGQQYWGQPGNRGGYRNFYDRYRGDYDRFYGRDYEYNRYRDYYRQYNRDWQSYYYHHPQDRDRYYRNYYGYQGYR</sequence>